<comment type="function">
    <text evidence="1">Attaches a formyl group to the free amino group of methionyl-tRNA(fMet). The formyl group appears to play a dual role in the initiator identity of N-formylmethionyl-tRNA by promoting its recognition by IF2 and preventing the misappropriation of this tRNA by the elongation apparatus.</text>
</comment>
<comment type="catalytic activity">
    <reaction evidence="1">
        <text>L-methionyl-tRNA(fMet) + (6R)-10-formyltetrahydrofolate = N-formyl-L-methionyl-tRNA(fMet) + (6S)-5,6,7,8-tetrahydrofolate + H(+)</text>
        <dbReference type="Rhea" id="RHEA:24380"/>
        <dbReference type="Rhea" id="RHEA-COMP:9952"/>
        <dbReference type="Rhea" id="RHEA-COMP:9953"/>
        <dbReference type="ChEBI" id="CHEBI:15378"/>
        <dbReference type="ChEBI" id="CHEBI:57453"/>
        <dbReference type="ChEBI" id="CHEBI:78530"/>
        <dbReference type="ChEBI" id="CHEBI:78844"/>
        <dbReference type="ChEBI" id="CHEBI:195366"/>
        <dbReference type="EC" id="2.1.2.9"/>
    </reaction>
</comment>
<comment type="similarity">
    <text evidence="1">Belongs to the Fmt family.</text>
</comment>
<gene>
    <name evidence="1" type="primary">fmt</name>
    <name type="ordered locus">Sbal223_0030</name>
</gene>
<dbReference type="EC" id="2.1.2.9" evidence="1"/>
<dbReference type="EMBL" id="CP001252">
    <property type="protein sequence ID" value="ACK44574.1"/>
    <property type="molecule type" value="Genomic_DNA"/>
</dbReference>
<dbReference type="RefSeq" id="WP_012586343.1">
    <property type="nucleotide sequence ID" value="NC_011663.1"/>
</dbReference>
<dbReference type="SMR" id="B8E3S3"/>
<dbReference type="KEGG" id="sbp:Sbal223_0030"/>
<dbReference type="HOGENOM" id="CLU_033347_1_2_6"/>
<dbReference type="Proteomes" id="UP000002507">
    <property type="component" value="Chromosome"/>
</dbReference>
<dbReference type="GO" id="GO:0005829">
    <property type="term" value="C:cytosol"/>
    <property type="evidence" value="ECO:0007669"/>
    <property type="project" value="TreeGrafter"/>
</dbReference>
<dbReference type="GO" id="GO:0004479">
    <property type="term" value="F:methionyl-tRNA formyltransferase activity"/>
    <property type="evidence" value="ECO:0007669"/>
    <property type="project" value="UniProtKB-UniRule"/>
</dbReference>
<dbReference type="CDD" id="cd08646">
    <property type="entry name" value="FMT_core_Met-tRNA-FMT_N"/>
    <property type="match status" value="1"/>
</dbReference>
<dbReference type="CDD" id="cd08704">
    <property type="entry name" value="Met_tRNA_FMT_C"/>
    <property type="match status" value="1"/>
</dbReference>
<dbReference type="FunFam" id="3.40.50.170:FF:000003">
    <property type="entry name" value="Methionyl-tRNA formyltransferase"/>
    <property type="match status" value="1"/>
</dbReference>
<dbReference type="Gene3D" id="3.10.25.10">
    <property type="entry name" value="Formyl transferase, C-terminal domain"/>
    <property type="match status" value="1"/>
</dbReference>
<dbReference type="Gene3D" id="3.40.50.170">
    <property type="entry name" value="Formyl transferase, N-terminal domain"/>
    <property type="match status" value="1"/>
</dbReference>
<dbReference type="HAMAP" id="MF_00182">
    <property type="entry name" value="Formyl_trans"/>
    <property type="match status" value="1"/>
</dbReference>
<dbReference type="InterPro" id="IPR005794">
    <property type="entry name" value="Fmt"/>
</dbReference>
<dbReference type="InterPro" id="IPR005793">
    <property type="entry name" value="Formyl_trans_C"/>
</dbReference>
<dbReference type="InterPro" id="IPR037022">
    <property type="entry name" value="Formyl_trans_C_sf"/>
</dbReference>
<dbReference type="InterPro" id="IPR002376">
    <property type="entry name" value="Formyl_transf_N"/>
</dbReference>
<dbReference type="InterPro" id="IPR036477">
    <property type="entry name" value="Formyl_transf_N_sf"/>
</dbReference>
<dbReference type="InterPro" id="IPR011034">
    <property type="entry name" value="Formyl_transferase-like_C_sf"/>
</dbReference>
<dbReference type="InterPro" id="IPR001555">
    <property type="entry name" value="GART_AS"/>
</dbReference>
<dbReference type="InterPro" id="IPR044135">
    <property type="entry name" value="Met-tRNA-FMT_C"/>
</dbReference>
<dbReference type="InterPro" id="IPR041711">
    <property type="entry name" value="Met-tRNA-FMT_N"/>
</dbReference>
<dbReference type="NCBIfam" id="TIGR00460">
    <property type="entry name" value="fmt"/>
    <property type="match status" value="1"/>
</dbReference>
<dbReference type="PANTHER" id="PTHR11138">
    <property type="entry name" value="METHIONYL-TRNA FORMYLTRANSFERASE"/>
    <property type="match status" value="1"/>
</dbReference>
<dbReference type="PANTHER" id="PTHR11138:SF5">
    <property type="entry name" value="METHIONYL-TRNA FORMYLTRANSFERASE, MITOCHONDRIAL"/>
    <property type="match status" value="1"/>
</dbReference>
<dbReference type="Pfam" id="PF02911">
    <property type="entry name" value="Formyl_trans_C"/>
    <property type="match status" value="1"/>
</dbReference>
<dbReference type="Pfam" id="PF00551">
    <property type="entry name" value="Formyl_trans_N"/>
    <property type="match status" value="1"/>
</dbReference>
<dbReference type="SUPFAM" id="SSF50486">
    <property type="entry name" value="FMT C-terminal domain-like"/>
    <property type="match status" value="1"/>
</dbReference>
<dbReference type="SUPFAM" id="SSF53328">
    <property type="entry name" value="Formyltransferase"/>
    <property type="match status" value="1"/>
</dbReference>
<dbReference type="PROSITE" id="PS00373">
    <property type="entry name" value="GART"/>
    <property type="match status" value="1"/>
</dbReference>
<keyword id="KW-0648">Protein biosynthesis</keyword>
<keyword id="KW-0808">Transferase</keyword>
<evidence type="ECO:0000255" key="1">
    <source>
        <dbReference type="HAMAP-Rule" id="MF_00182"/>
    </source>
</evidence>
<feature type="chain" id="PRO_1000190040" description="Methionyl-tRNA formyltransferase">
    <location>
        <begin position="1"/>
        <end position="318"/>
    </location>
</feature>
<feature type="binding site" evidence="1">
    <location>
        <begin position="112"/>
        <end position="115"/>
    </location>
    <ligand>
        <name>(6S)-5,6,7,8-tetrahydrofolate</name>
        <dbReference type="ChEBI" id="CHEBI:57453"/>
    </ligand>
</feature>
<sequence length="318" mass="34503">MKPLNIIFAGTPDFAARHLQALLNSHHNVIGVYTQPDRPAGRGKKLTASPVKELAVANNIPVYQPGSLRKEPAQQELAALNADIMVVVAYGLILPKVVLDTPRLGCINVHGSILPRWRGAAPIQRALWAGDKETGVTVMQMDVGLDTGDMLLKTYLPIEDSDTSASLYEKLAEQGPVALLQALEGLANGTLAAEKQDEALANYAEKLSKEEARLDWNKSAKQLWQEVRAFNPWPVSYFEHQGNTIKVWQTQVSETTSTAAPGTIISASKKGIEVATADGVLTLLSMQLPGKKPLNVADILNARGEWFSPNTRLANEAQ</sequence>
<reference key="1">
    <citation type="submission" date="2008-12" db="EMBL/GenBank/DDBJ databases">
        <title>Complete sequence of chromosome of Shewanella baltica OS223.</title>
        <authorList>
            <consortium name="US DOE Joint Genome Institute"/>
            <person name="Lucas S."/>
            <person name="Copeland A."/>
            <person name="Lapidus A."/>
            <person name="Glavina del Rio T."/>
            <person name="Dalin E."/>
            <person name="Tice H."/>
            <person name="Bruce D."/>
            <person name="Goodwin L."/>
            <person name="Pitluck S."/>
            <person name="Chertkov O."/>
            <person name="Meincke L."/>
            <person name="Brettin T."/>
            <person name="Detter J.C."/>
            <person name="Han C."/>
            <person name="Kuske C.R."/>
            <person name="Larimer F."/>
            <person name="Land M."/>
            <person name="Hauser L."/>
            <person name="Kyrpides N."/>
            <person name="Ovchinnikova G."/>
            <person name="Brettar I."/>
            <person name="Rodrigues J."/>
            <person name="Konstantinidis K."/>
            <person name="Tiedje J."/>
        </authorList>
    </citation>
    <scope>NUCLEOTIDE SEQUENCE [LARGE SCALE GENOMIC DNA]</scope>
    <source>
        <strain>OS223</strain>
    </source>
</reference>
<accession>B8E3S3</accession>
<proteinExistence type="inferred from homology"/>
<name>FMT_SHEB2</name>
<protein>
    <recommendedName>
        <fullName evidence="1">Methionyl-tRNA formyltransferase</fullName>
        <ecNumber evidence="1">2.1.2.9</ecNumber>
    </recommendedName>
</protein>
<organism>
    <name type="scientific">Shewanella baltica (strain OS223)</name>
    <dbReference type="NCBI Taxonomy" id="407976"/>
    <lineage>
        <taxon>Bacteria</taxon>
        <taxon>Pseudomonadati</taxon>
        <taxon>Pseudomonadota</taxon>
        <taxon>Gammaproteobacteria</taxon>
        <taxon>Alteromonadales</taxon>
        <taxon>Shewanellaceae</taxon>
        <taxon>Shewanella</taxon>
    </lineage>
</organism>